<comment type="function">
    <text evidence="2">GTP-binding protein that functions as an allosteric activator of the cholera toxin catalytic subunit, an ADP-ribosyltransferase. Involved in protein trafficking; may modulate vesicle budding and uncoating within the Golgi apparatus. Part of the ciliary targeting complex containing Rab11, ASAP1, Rabin8/RAB3IP, RAB11FIP3 and ARF4, which direct preciliary vesicle trafficking to mother centriole and ciliogenesis initiation (By similarity).</text>
</comment>
<comment type="subunit">
    <text evidence="2">Forms a complex containing RAB11A, ASAP1, RAB3IP, RAP11FIP3 and ARF4; the complex promotes preciliary trafficking; the complex binds to RHO in photoreceptor cells and promotes RHO ciliary transport.</text>
</comment>
<comment type="interaction">
    <interactant intactId="EBI-7569554">
        <id>P61750</id>
    </interactant>
    <interactant intactId="EBI-7569313">
        <id>Q8BYR5</id>
        <label>Cadps2</label>
    </interactant>
    <organismsDiffer>false</organismsDiffer>
    <experiments>2</experiments>
</comment>
<comment type="subcellular location">
    <subcellularLocation>
        <location evidence="2">Golgi apparatus</location>
    </subcellularLocation>
    <subcellularLocation>
        <location evidence="2">Membrane</location>
        <topology evidence="2">Lipid-anchor</topology>
    </subcellularLocation>
</comment>
<comment type="similarity">
    <text evidence="3">Belongs to the small GTPase superfamily. Arf family.</text>
</comment>
<accession>P61750</accession>
<accession>P36403</accession>
<accession>Q3TGC2</accession>
<accession>Q9CXX3</accession>
<organism>
    <name type="scientific">Mus musculus</name>
    <name type="common">Mouse</name>
    <dbReference type="NCBI Taxonomy" id="10090"/>
    <lineage>
        <taxon>Eukaryota</taxon>
        <taxon>Metazoa</taxon>
        <taxon>Chordata</taxon>
        <taxon>Craniata</taxon>
        <taxon>Vertebrata</taxon>
        <taxon>Euteleostomi</taxon>
        <taxon>Mammalia</taxon>
        <taxon>Eutheria</taxon>
        <taxon>Euarchontoglires</taxon>
        <taxon>Glires</taxon>
        <taxon>Rodentia</taxon>
        <taxon>Myomorpha</taxon>
        <taxon>Muroidea</taxon>
        <taxon>Muridae</taxon>
        <taxon>Murinae</taxon>
        <taxon>Mus</taxon>
        <taxon>Mus</taxon>
    </lineage>
</organism>
<name>ARF4_MOUSE</name>
<evidence type="ECO:0000250" key="1"/>
<evidence type="ECO:0000250" key="2">
    <source>
        <dbReference type="UniProtKB" id="P18085"/>
    </source>
</evidence>
<evidence type="ECO:0000305" key="3"/>
<feature type="initiator methionine" description="Removed" evidence="2">
    <location>
        <position position="1"/>
    </location>
</feature>
<feature type="chain" id="PRO_0000207392" description="ADP-ribosylation factor 4">
    <location>
        <begin position="2"/>
        <end position="180"/>
    </location>
</feature>
<feature type="binding site" evidence="1">
    <location>
        <begin position="24"/>
        <end position="31"/>
    </location>
    <ligand>
        <name>GTP</name>
        <dbReference type="ChEBI" id="CHEBI:37565"/>
    </ligand>
</feature>
<feature type="binding site" evidence="1">
    <location>
        <begin position="67"/>
        <end position="71"/>
    </location>
    <ligand>
        <name>GTP</name>
        <dbReference type="ChEBI" id="CHEBI:37565"/>
    </ligand>
</feature>
<feature type="binding site" evidence="1">
    <location>
        <begin position="126"/>
        <end position="129"/>
    </location>
    <ligand>
        <name>GTP</name>
        <dbReference type="ChEBI" id="CHEBI:37565"/>
    </ligand>
</feature>
<feature type="modified residue" description="Phosphoserine" evidence="2">
    <location>
        <position position="147"/>
    </location>
</feature>
<feature type="lipid moiety-binding region" description="N-myristoyl glycine" evidence="2">
    <location>
        <position position="2"/>
    </location>
</feature>
<feature type="sequence conflict" description="In Ref. 2; BAB29041." evidence="3" ref="2">
    <original>Q</original>
    <variation>E</variation>
    <location>
        <position position="108"/>
    </location>
</feature>
<feature type="sequence conflict" description="In Ref. 2; BAB29041." evidence="3" ref="2">
    <original>E</original>
    <variation>R</variation>
    <location>
        <position position="176"/>
    </location>
</feature>
<gene>
    <name type="primary">Arf4</name>
</gene>
<sequence>MGLTISSLFSRLFGKKQMRILMVGLDAAGKTTILYKLKLGEIVTTIPTIGFNVETVEYKNICFTVWDVGGQDKIRPLWRHYFQNTQGLIFVVDSNDRERIQEGAAVLQKMLLEDELQDAVLLLFANKQDLPNAMAISEMTDKLGLQSLRNRTWYVQATCATQGTGLYEGLDWLSNELSKR</sequence>
<reference key="1">
    <citation type="journal article" date="1996" name="J. Biochem.">
        <title>Structure and intracellular localization of mouse ADP-ribosylation factors type 1 to type 6 (ARF1-ARF6).</title>
        <authorList>
            <person name="Hosaka M."/>
            <person name="Toda K."/>
            <person name="Takatsu H."/>
            <person name="Torii S."/>
            <person name="Murakami K."/>
            <person name="Nakayama K."/>
        </authorList>
    </citation>
    <scope>NUCLEOTIDE SEQUENCE [MRNA]</scope>
    <source>
        <strain>ICR</strain>
        <tissue>Brain</tissue>
    </source>
</reference>
<reference key="2">
    <citation type="journal article" date="2005" name="Science">
        <title>The transcriptional landscape of the mammalian genome.</title>
        <authorList>
            <person name="Carninci P."/>
            <person name="Kasukawa T."/>
            <person name="Katayama S."/>
            <person name="Gough J."/>
            <person name="Frith M.C."/>
            <person name="Maeda N."/>
            <person name="Oyama R."/>
            <person name="Ravasi T."/>
            <person name="Lenhard B."/>
            <person name="Wells C."/>
            <person name="Kodzius R."/>
            <person name="Shimokawa K."/>
            <person name="Bajic V.B."/>
            <person name="Brenner S.E."/>
            <person name="Batalov S."/>
            <person name="Forrest A.R."/>
            <person name="Zavolan M."/>
            <person name="Davis M.J."/>
            <person name="Wilming L.G."/>
            <person name="Aidinis V."/>
            <person name="Allen J.E."/>
            <person name="Ambesi-Impiombato A."/>
            <person name="Apweiler R."/>
            <person name="Aturaliya R.N."/>
            <person name="Bailey T.L."/>
            <person name="Bansal M."/>
            <person name="Baxter L."/>
            <person name="Beisel K.W."/>
            <person name="Bersano T."/>
            <person name="Bono H."/>
            <person name="Chalk A.M."/>
            <person name="Chiu K.P."/>
            <person name="Choudhary V."/>
            <person name="Christoffels A."/>
            <person name="Clutterbuck D.R."/>
            <person name="Crowe M.L."/>
            <person name="Dalla E."/>
            <person name="Dalrymple B.P."/>
            <person name="de Bono B."/>
            <person name="Della Gatta G."/>
            <person name="di Bernardo D."/>
            <person name="Down T."/>
            <person name="Engstrom P."/>
            <person name="Fagiolini M."/>
            <person name="Faulkner G."/>
            <person name="Fletcher C.F."/>
            <person name="Fukushima T."/>
            <person name="Furuno M."/>
            <person name="Futaki S."/>
            <person name="Gariboldi M."/>
            <person name="Georgii-Hemming P."/>
            <person name="Gingeras T.R."/>
            <person name="Gojobori T."/>
            <person name="Green R.E."/>
            <person name="Gustincich S."/>
            <person name="Harbers M."/>
            <person name="Hayashi Y."/>
            <person name="Hensch T.K."/>
            <person name="Hirokawa N."/>
            <person name="Hill D."/>
            <person name="Huminiecki L."/>
            <person name="Iacono M."/>
            <person name="Ikeo K."/>
            <person name="Iwama A."/>
            <person name="Ishikawa T."/>
            <person name="Jakt M."/>
            <person name="Kanapin A."/>
            <person name="Katoh M."/>
            <person name="Kawasawa Y."/>
            <person name="Kelso J."/>
            <person name="Kitamura H."/>
            <person name="Kitano H."/>
            <person name="Kollias G."/>
            <person name="Krishnan S.P."/>
            <person name="Kruger A."/>
            <person name="Kummerfeld S.K."/>
            <person name="Kurochkin I.V."/>
            <person name="Lareau L.F."/>
            <person name="Lazarevic D."/>
            <person name="Lipovich L."/>
            <person name="Liu J."/>
            <person name="Liuni S."/>
            <person name="McWilliam S."/>
            <person name="Madan Babu M."/>
            <person name="Madera M."/>
            <person name="Marchionni L."/>
            <person name="Matsuda H."/>
            <person name="Matsuzawa S."/>
            <person name="Miki H."/>
            <person name="Mignone F."/>
            <person name="Miyake S."/>
            <person name="Morris K."/>
            <person name="Mottagui-Tabar S."/>
            <person name="Mulder N."/>
            <person name="Nakano N."/>
            <person name="Nakauchi H."/>
            <person name="Ng P."/>
            <person name="Nilsson R."/>
            <person name="Nishiguchi S."/>
            <person name="Nishikawa S."/>
            <person name="Nori F."/>
            <person name="Ohara O."/>
            <person name="Okazaki Y."/>
            <person name="Orlando V."/>
            <person name="Pang K.C."/>
            <person name="Pavan W.J."/>
            <person name="Pavesi G."/>
            <person name="Pesole G."/>
            <person name="Petrovsky N."/>
            <person name="Piazza S."/>
            <person name="Reed J."/>
            <person name="Reid J.F."/>
            <person name="Ring B.Z."/>
            <person name="Ringwald M."/>
            <person name="Rost B."/>
            <person name="Ruan Y."/>
            <person name="Salzberg S.L."/>
            <person name="Sandelin A."/>
            <person name="Schneider C."/>
            <person name="Schoenbach C."/>
            <person name="Sekiguchi K."/>
            <person name="Semple C.A."/>
            <person name="Seno S."/>
            <person name="Sessa L."/>
            <person name="Sheng Y."/>
            <person name="Shibata Y."/>
            <person name="Shimada H."/>
            <person name="Shimada K."/>
            <person name="Silva D."/>
            <person name="Sinclair B."/>
            <person name="Sperling S."/>
            <person name="Stupka E."/>
            <person name="Sugiura K."/>
            <person name="Sultana R."/>
            <person name="Takenaka Y."/>
            <person name="Taki K."/>
            <person name="Tammoja K."/>
            <person name="Tan S.L."/>
            <person name="Tang S."/>
            <person name="Taylor M.S."/>
            <person name="Tegner J."/>
            <person name="Teichmann S.A."/>
            <person name="Ueda H.R."/>
            <person name="van Nimwegen E."/>
            <person name="Verardo R."/>
            <person name="Wei C.L."/>
            <person name="Yagi K."/>
            <person name="Yamanishi H."/>
            <person name="Zabarovsky E."/>
            <person name="Zhu S."/>
            <person name="Zimmer A."/>
            <person name="Hide W."/>
            <person name="Bult C."/>
            <person name="Grimmond S.M."/>
            <person name="Teasdale R.D."/>
            <person name="Liu E.T."/>
            <person name="Brusic V."/>
            <person name="Quackenbush J."/>
            <person name="Wahlestedt C."/>
            <person name="Mattick J.S."/>
            <person name="Hume D.A."/>
            <person name="Kai C."/>
            <person name="Sasaki D."/>
            <person name="Tomaru Y."/>
            <person name="Fukuda S."/>
            <person name="Kanamori-Katayama M."/>
            <person name="Suzuki M."/>
            <person name="Aoki J."/>
            <person name="Arakawa T."/>
            <person name="Iida J."/>
            <person name="Imamura K."/>
            <person name="Itoh M."/>
            <person name="Kato T."/>
            <person name="Kawaji H."/>
            <person name="Kawagashira N."/>
            <person name="Kawashima T."/>
            <person name="Kojima M."/>
            <person name="Kondo S."/>
            <person name="Konno H."/>
            <person name="Nakano K."/>
            <person name="Ninomiya N."/>
            <person name="Nishio T."/>
            <person name="Okada M."/>
            <person name="Plessy C."/>
            <person name="Shibata K."/>
            <person name="Shiraki T."/>
            <person name="Suzuki S."/>
            <person name="Tagami M."/>
            <person name="Waki K."/>
            <person name="Watahiki A."/>
            <person name="Okamura-Oho Y."/>
            <person name="Suzuki H."/>
            <person name="Kawai J."/>
            <person name="Hayashizaki Y."/>
        </authorList>
    </citation>
    <scope>NUCLEOTIDE SEQUENCE [LARGE SCALE MRNA]</scope>
    <source>
        <strain>C57BL/6J</strain>
        <tissue>Bone marrow</tissue>
        <tissue>Head</tissue>
        <tissue>Heart</tissue>
    </source>
</reference>
<reference key="3">
    <citation type="journal article" date="2010" name="Cell">
        <title>A tissue-specific atlas of mouse protein phosphorylation and expression.</title>
        <authorList>
            <person name="Huttlin E.L."/>
            <person name="Jedrychowski M.P."/>
            <person name="Elias J.E."/>
            <person name="Goswami T."/>
            <person name="Rad R."/>
            <person name="Beausoleil S.A."/>
            <person name="Villen J."/>
            <person name="Haas W."/>
            <person name="Sowa M.E."/>
            <person name="Gygi S.P."/>
        </authorList>
    </citation>
    <scope>IDENTIFICATION BY MASS SPECTROMETRY [LARGE SCALE ANALYSIS]</scope>
    <source>
        <tissue>Brain</tissue>
        <tissue>Brown adipose tissue</tissue>
        <tissue>Heart</tissue>
        <tissue>Kidney</tissue>
        <tissue>Liver</tissue>
        <tissue>Lung</tissue>
        <tissue>Pancreas</tissue>
        <tissue>Spleen</tissue>
        <tissue>Testis</tissue>
    </source>
</reference>
<proteinExistence type="evidence at protein level"/>
<dbReference type="EMBL" id="D87901">
    <property type="protein sequence ID" value="BAA13493.1"/>
    <property type="molecule type" value="mRNA"/>
</dbReference>
<dbReference type="EMBL" id="AK013892">
    <property type="protein sequence ID" value="BAB29041.1"/>
    <property type="molecule type" value="mRNA"/>
</dbReference>
<dbReference type="EMBL" id="AK081686">
    <property type="protein sequence ID" value="BAC38292.1"/>
    <property type="molecule type" value="mRNA"/>
</dbReference>
<dbReference type="EMBL" id="AK153011">
    <property type="protein sequence ID" value="BAE31650.1"/>
    <property type="molecule type" value="mRNA"/>
</dbReference>
<dbReference type="EMBL" id="AK168793">
    <property type="protein sequence ID" value="BAE40626.1"/>
    <property type="molecule type" value="mRNA"/>
</dbReference>
<dbReference type="CCDS" id="CCDS26881.1"/>
<dbReference type="PIR" id="JC4948">
    <property type="entry name" value="JC4948"/>
</dbReference>
<dbReference type="RefSeq" id="NP_031505.1">
    <property type="nucleotide sequence ID" value="NM_007479.4"/>
</dbReference>
<dbReference type="SMR" id="P61750"/>
<dbReference type="BioGRID" id="198187">
    <property type="interactions" value="16"/>
</dbReference>
<dbReference type="FunCoup" id="P61750">
    <property type="interactions" value="1737"/>
</dbReference>
<dbReference type="IntAct" id="P61750">
    <property type="interactions" value="4"/>
</dbReference>
<dbReference type="MINT" id="P61750"/>
<dbReference type="STRING" id="10090.ENSMUSP00000022429"/>
<dbReference type="GlyGen" id="P61750">
    <property type="glycosylation" value="1 site, 1 O-linked glycan (1 site)"/>
</dbReference>
<dbReference type="iPTMnet" id="P61750"/>
<dbReference type="PhosphoSitePlus" id="P61750"/>
<dbReference type="SwissPalm" id="P61750"/>
<dbReference type="jPOST" id="P61750"/>
<dbReference type="PaxDb" id="10090-ENSMUSP00000022429"/>
<dbReference type="PeptideAtlas" id="P61750"/>
<dbReference type="ProteomicsDB" id="277273"/>
<dbReference type="Pumba" id="P61750"/>
<dbReference type="Antibodypedia" id="46310">
    <property type="antibodies" value="234 antibodies from 32 providers"/>
</dbReference>
<dbReference type="DNASU" id="11843"/>
<dbReference type="Ensembl" id="ENSMUST00000022429.9">
    <property type="protein sequence ID" value="ENSMUSP00000022429.3"/>
    <property type="gene ID" value="ENSMUSG00000021877.13"/>
</dbReference>
<dbReference type="GeneID" id="11843"/>
<dbReference type="KEGG" id="mmu:11843"/>
<dbReference type="UCSC" id="uc007sta.1">
    <property type="organism name" value="mouse"/>
</dbReference>
<dbReference type="AGR" id="MGI:99433"/>
<dbReference type="CTD" id="378"/>
<dbReference type="MGI" id="MGI:99433">
    <property type="gene designation" value="Arf4"/>
</dbReference>
<dbReference type="VEuPathDB" id="HostDB:ENSMUSG00000021877"/>
<dbReference type="eggNOG" id="KOG0070">
    <property type="taxonomic scope" value="Eukaryota"/>
</dbReference>
<dbReference type="GeneTree" id="ENSGT00940000156297"/>
<dbReference type="HOGENOM" id="CLU_040729_9_3_1"/>
<dbReference type="InParanoid" id="P61750"/>
<dbReference type="OMA" id="DWLCNEL"/>
<dbReference type="OrthoDB" id="2011769at2759"/>
<dbReference type="PhylomeDB" id="P61750"/>
<dbReference type="TreeFam" id="TF300808"/>
<dbReference type="Reactome" id="R-MMU-5620916">
    <property type="pathway name" value="VxPx cargo-targeting to cilium"/>
</dbReference>
<dbReference type="Reactome" id="R-MMU-6807878">
    <property type="pathway name" value="COPI-mediated anterograde transport"/>
</dbReference>
<dbReference type="Reactome" id="R-MMU-6811434">
    <property type="pathway name" value="COPI-dependent Golgi-to-ER retrograde traffic"/>
</dbReference>
<dbReference type="BioGRID-ORCS" id="11843">
    <property type="hits" value="11 hits in 78 CRISPR screens"/>
</dbReference>
<dbReference type="ChiTaRS" id="Arf4">
    <property type="organism name" value="mouse"/>
</dbReference>
<dbReference type="PRO" id="PR:P61750"/>
<dbReference type="Proteomes" id="UP000000589">
    <property type="component" value="Chromosome 14"/>
</dbReference>
<dbReference type="RNAct" id="P61750">
    <property type="molecule type" value="protein"/>
</dbReference>
<dbReference type="Bgee" id="ENSMUSG00000021877">
    <property type="expression patterns" value="Expressed in undifferentiated genital tubercle and 273 other cell types or tissues"/>
</dbReference>
<dbReference type="ExpressionAtlas" id="P61750">
    <property type="expression patterns" value="baseline and differential"/>
</dbReference>
<dbReference type="GO" id="GO:0005737">
    <property type="term" value="C:cytoplasm"/>
    <property type="evidence" value="ECO:0000314"/>
    <property type="project" value="MGI"/>
</dbReference>
<dbReference type="GO" id="GO:0005829">
    <property type="term" value="C:cytosol"/>
    <property type="evidence" value="ECO:0007669"/>
    <property type="project" value="Ensembl"/>
</dbReference>
<dbReference type="GO" id="GO:0043197">
    <property type="term" value="C:dendritic spine"/>
    <property type="evidence" value="ECO:0000266"/>
    <property type="project" value="MGI"/>
</dbReference>
<dbReference type="GO" id="GO:0098978">
    <property type="term" value="C:glutamatergic synapse"/>
    <property type="evidence" value="ECO:0000314"/>
    <property type="project" value="SynGO"/>
</dbReference>
<dbReference type="GO" id="GO:0005794">
    <property type="term" value="C:Golgi apparatus"/>
    <property type="evidence" value="ECO:0000314"/>
    <property type="project" value="MGI"/>
</dbReference>
<dbReference type="GO" id="GO:0000139">
    <property type="term" value="C:Golgi membrane"/>
    <property type="evidence" value="ECO:0000250"/>
    <property type="project" value="UniProtKB"/>
</dbReference>
<dbReference type="GO" id="GO:0005886">
    <property type="term" value="C:plasma membrane"/>
    <property type="evidence" value="ECO:0000314"/>
    <property type="project" value="MGI"/>
</dbReference>
<dbReference type="GO" id="GO:0032587">
    <property type="term" value="C:ruffle membrane"/>
    <property type="evidence" value="ECO:0007669"/>
    <property type="project" value="Ensembl"/>
</dbReference>
<dbReference type="GO" id="GO:0005154">
    <property type="term" value="F:epidermal growth factor receptor binding"/>
    <property type="evidence" value="ECO:0007669"/>
    <property type="project" value="Ensembl"/>
</dbReference>
<dbReference type="GO" id="GO:0005525">
    <property type="term" value="F:GTP binding"/>
    <property type="evidence" value="ECO:0007669"/>
    <property type="project" value="UniProtKB-KW"/>
</dbReference>
<dbReference type="GO" id="GO:0003924">
    <property type="term" value="F:GTPase activity"/>
    <property type="evidence" value="ECO:0007669"/>
    <property type="project" value="InterPro"/>
</dbReference>
<dbReference type="GO" id="GO:0106274">
    <property type="term" value="F:NAD+-protein-arginine ADP-ribosyltransferase activity"/>
    <property type="evidence" value="ECO:0007669"/>
    <property type="project" value="Ensembl"/>
</dbReference>
<dbReference type="GO" id="GO:1990583">
    <property type="term" value="F:phospholipase D activator activity"/>
    <property type="evidence" value="ECO:0007669"/>
    <property type="project" value="Ensembl"/>
</dbReference>
<dbReference type="GO" id="GO:0045176">
    <property type="term" value="P:apical protein localization"/>
    <property type="evidence" value="ECO:0000315"/>
    <property type="project" value="MGI"/>
</dbReference>
<dbReference type="GO" id="GO:0016477">
    <property type="term" value="P:cell migration"/>
    <property type="evidence" value="ECO:0007669"/>
    <property type="project" value="Ensembl"/>
</dbReference>
<dbReference type="GO" id="GO:0060996">
    <property type="term" value="P:dendritic spine development"/>
    <property type="evidence" value="ECO:0000315"/>
    <property type="project" value="MGI"/>
</dbReference>
<dbReference type="GO" id="GO:0007173">
    <property type="term" value="P:epidermal growth factor receptor signaling pathway"/>
    <property type="evidence" value="ECO:0007669"/>
    <property type="project" value="Ensembl"/>
</dbReference>
<dbReference type="GO" id="GO:0045197">
    <property type="term" value="P:establishment or maintenance of epithelial cell apical/basal polarity"/>
    <property type="evidence" value="ECO:0000315"/>
    <property type="project" value="MGI"/>
</dbReference>
<dbReference type="GO" id="GO:0007612">
    <property type="term" value="P:learning"/>
    <property type="evidence" value="ECO:0000315"/>
    <property type="project" value="MGI"/>
</dbReference>
<dbReference type="GO" id="GO:0043066">
    <property type="term" value="P:negative regulation of apoptotic process"/>
    <property type="evidence" value="ECO:0007669"/>
    <property type="project" value="Ensembl"/>
</dbReference>
<dbReference type="GO" id="GO:0045944">
    <property type="term" value="P:positive regulation of transcription by RNA polymerase II"/>
    <property type="evidence" value="ECO:0007669"/>
    <property type="project" value="Ensembl"/>
</dbReference>
<dbReference type="GO" id="GO:0061512">
    <property type="term" value="P:protein localization to cilium"/>
    <property type="evidence" value="ECO:0000315"/>
    <property type="project" value="MGI"/>
</dbReference>
<dbReference type="GO" id="GO:0015031">
    <property type="term" value="P:protein transport"/>
    <property type="evidence" value="ECO:0007669"/>
    <property type="project" value="UniProtKB-KW"/>
</dbReference>
<dbReference type="GO" id="GO:1902017">
    <property type="term" value="P:regulation of cilium assembly"/>
    <property type="evidence" value="ECO:0000250"/>
    <property type="project" value="UniProtKB"/>
</dbReference>
<dbReference type="GO" id="GO:0099175">
    <property type="term" value="P:regulation of postsynapse organization"/>
    <property type="evidence" value="ECO:0000314"/>
    <property type="project" value="SynGO"/>
</dbReference>
<dbReference type="GO" id="GO:2000377">
    <property type="term" value="P:regulation of reactive oxygen species metabolic process"/>
    <property type="evidence" value="ECO:0007669"/>
    <property type="project" value="Ensembl"/>
</dbReference>
<dbReference type="GO" id="GO:0050807">
    <property type="term" value="P:regulation of synapse organization"/>
    <property type="evidence" value="ECO:0000314"/>
    <property type="project" value="SynGO"/>
</dbReference>
<dbReference type="GO" id="GO:0048678">
    <property type="term" value="P:response to axon injury"/>
    <property type="evidence" value="ECO:0007669"/>
    <property type="project" value="Ensembl"/>
</dbReference>
<dbReference type="GO" id="GO:0006890">
    <property type="term" value="P:retrograde vesicle-mediated transport, Golgi to endoplasmic reticulum"/>
    <property type="evidence" value="ECO:0007669"/>
    <property type="project" value="Ensembl"/>
</dbReference>
<dbReference type="CDD" id="cd04150">
    <property type="entry name" value="Arf1_5_like"/>
    <property type="match status" value="1"/>
</dbReference>
<dbReference type="FunFam" id="3.40.50.300:FF:000024">
    <property type="entry name" value="ADP-ribosylation factor 1"/>
    <property type="match status" value="1"/>
</dbReference>
<dbReference type="Gene3D" id="3.40.50.300">
    <property type="entry name" value="P-loop containing nucleotide triphosphate hydrolases"/>
    <property type="match status" value="1"/>
</dbReference>
<dbReference type="InterPro" id="IPR045872">
    <property type="entry name" value="Arf1-5-like"/>
</dbReference>
<dbReference type="InterPro" id="IPR027417">
    <property type="entry name" value="P-loop_NTPase"/>
</dbReference>
<dbReference type="InterPro" id="IPR005225">
    <property type="entry name" value="Small_GTP-bd"/>
</dbReference>
<dbReference type="InterPro" id="IPR024156">
    <property type="entry name" value="Small_GTPase_ARF"/>
</dbReference>
<dbReference type="InterPro" id="IPR006689">
    <property type="entry name" value="Small_GTPase_ARF/SAR"/>
</dbReference>
<dbReference type="NCBIfam" id="TIGR00231">
    <property type="entry name" value="small_GTP"/>
    <property type="match status" value="1"/>
</dbReference>
<dbReference type="PANTHER" id="PTHR11711">
    <property type="entry name" value="ADP RIBOSYLATION FACTOR-RELATED"/>
    <property type="match status" value="1"/>
</dbReference>
<dbReference type="Pfam" id="PF00025">
    <property type="entry name" value="Arf"/>
    <property type="match status" value="1"/>
</dbReference>
<dbReference type="PRINTS" id="PR00328">
    <property type="entry name" value="SAR1GTPBP"/>
</dbReference>
<dbReference type="SMART" id="SM00177">
    <property type="entry name" value="ARF"/>
    <property type="match status" value="1"/>
</dbReference>
<dbReference type="SMART" id="SM00175">
    <property type="entry name" value="RAB"/>
    <property type="match status" value="1"/>
</dbReference>
<dbReference type="SMART" id="SM00178">
    <property type="entry name" value="SAR"/>
    <property type="match status" value="1"/>
</dbReference>
<dbReference type="SUPFAM" id="SSF52540">
    <property type="entry name" value="P-loop containing nucleoside triphosphate hydrolases"/>
    <property type="match status" value="1"/>
</dbReference>
<dbReference type="PROSITE" id="PS51417">
    <property type="entry name" value="ARF"/>
    <property type="match status" value="1"/>
</dbReference>
<protein>
    <recommendedName>
        <fullName>ADP-ribosylation factor 4</fullName>
    </recommendedName>
</protein>
<keyword id="KW-0931">ER-Golgi transport</keyword>
<keyword id="KW-0333">Golgi apparatus</keyword>
<keyword id="KW-0342">GTP-binding</keyword>
<keyword id="KW-0449">Lipoprotein</keyword>
<keyword id="KW-0472">Membrane</keyword>
<keyword id="KW-0519">Myristate</keyword>
<keyword id="KW-0547">Nucleotide-binding</keyword>
<keyword id="KW-0597">Phosphoprotein</keyword>
<keyword id="KW-0653">Protein transport</keyword>
<keyword id="KW-1185">Reference proteome</keyword>
<keyword id="KW-0813">Transport</keyword>